<keyword id="KW-0067">ATP-binding</keyword>
<keyword id="KW-0963">Cytoplasm</keyword>
<keyword id="KW-0436">Ligase</keyword>
<keyword id="KW-0547">Nucleotide-binding</keyword>
<keyword id="KW-0566">Pantothenate biosynthesis</keyword>
<keyword id="KW-1185">Reference proteome</keyword>
<gene>
    <name evidence="1" type="primary">panC</name>
    <name type="ordered locus">Lcho_1177</name>
</gene>
<comment type="function">
    <text evidence="1">Catalyzes the condensation of pantoate with beta-alanine in an ATP-dependent reaction via a pantoyl-adenylate intermediate.</text>
</comment>
<comment type="catalytic activity">
    <reaction evidence="1">
        <text>(R)-pantoate + beta-alanine + ATP = (R)-pantothenate + AMP + diphosphate + H(+)</text>
        <dbReference type="Rhea" id="RHEA:10912"/>
        <dbReference type="ChEBI" id="CHEBI:15378"/>
        <dbReference type="ChEBI" id="CHEBI:15980"/>
        <dbReference type="ChEBI" id="CHEBI:29032"/>
        <dbReference type="ChEBI" id="CHEBI:30616"/>
        <dbReference type="ChEBI" id="CHEBI:33019"/>
        <dbReference type="ChEBI" id="CHEBI:57966"/>
        <dbReference type="ChEBI" id="CHEBI:456215"/>
        <dbReference type="EC" id="6.3.2.1"/>
    </reaction>
</comment>
<comment type="pathway">
    <text evidence="1">Cofactor biosynthesis; (R)-pantothenate biosynthesis; (R)-pantothenate from (R)-pantoate and beta-alanine: step 1/1.</text>
</comment>
<comment type="subunit">
    <text evidence="1">Homodimer.</text>
</comment>
<comment type="subcellular location">
    <subcellularLocation>
        <location evidence="1">Cytoplasm</location>
    </subcellularLocation>
</comment>
<comment type="miscellaneous">
    <text evidence="1">The reaction proceeds by a bi uni uni bi ping pong mechanism.</text>
</comment>
<comment type="similarity">
    <text evidence="1">Belongs to the pantothenate synthetase family.</text>
</comment>
<dbReference type="EC" id="6.3.2.1" evidence="1"/>
<dbReference type="EMBL" id="CP001013">
    <property type="protein sequence ID" value="ACB33446.1"/>
    <property type="molecule type" value="Genomic_DNA"/>
</dbReference>
<dbReference type="RefSeq" id="WP_012346208.1">
    <property type="nucleotide sequence ID" value="NC_010524.1"/>
</dbReference>
<dbReference type="SMR" id="B1Y4K7"/>
<dbReference type="STRING" id="395495.Lcho_1177"/>
<dbReference type="KEGG" id="lch:Lcho_1177"/>
<dbReference type="eggNOG" id="COG0414">
    <property type="taxonomic scope" value="Bacteria"/>
</dbReference>
<dbReference type="HOGENOM" id="CLU_047148_0_0_4"/>
<dbReference type="OrthoDB" id="9773087at2"/>
<dbReference type="UniPathway" id="UPA00028">
    <property type="reaction ID" value="UER00005"/>
</dbReference>
<dbReference type="Proteomes" id="UP000001693">
    <property type="component" value="Chromosome"/>
</dbReference>
<dbReference type="GO" id="GO:0005829">
    <property type="term" value="C:cytosol"/>
    <property type="evidence" value="ECO:0007669"/>
    <property type="project" value="TreeGrafter"/>
</dbReference>
<dbReference type="GO" id="GO:0005524">
    <property type="term" value="F:ATP binding"/>
    <property type="evidence" value="ECO:0007669"/>
    <property type="project" value="UniProtKB-KW"/>
</dbReference>
<dbReference type="GO" id="GO:0004592">
    <property type="term" value="F:pantoate-beta-alanine ligase activity"/>
    <property type="evidence" value="ECO:0007669"/>
    <property type="project" value="UniProtKB-UniRule"/>
</dbReference>
<dbReference type="GO" id="GO:0015940">
    <property type="term" value="P:pantothenate biosynthetic process"/>
    <property type="evidence" value="ECO:0007669"/>
    <property type="project" value="UniProtKB-UniRule"/>
</dbReference>
<dbReference type="CDD" id="cd00560">
    <property type="entry name" value="PanC"/>
    <property type="match status" value="1"/>
</dbReference>
<dbReference type="Gene3D" id="3.40.50.620">
    <property type="entry name" value="HUPs"/>
    <property type="match status" value="1"/>
</dbReference>
<dbReference type="Gene3D" id="3.30.1300.10">
    <property type="entry name" value="Pantoate-beta-alanine ligase, C-terminal domain"/>
    <property type="match status" value="1"/>
</dbReference>
<dbReference type="HAMAP" id="MF_00158">
    <property type="entry name" value="PanC"/>
    <property type="match status" value="1"/>
</dbReference>
<dbReference type="InterPro" id="IPR003721">
    <property type="entry name" value="Pantoate_ligase"/>
</dbReference>
<dbReference type="InterPro" id="IPR042176">
    <property type="entry name" value="Pantoate_ligase_C"/>
</dbReference>
<dbReference type="InterPro" id="IPR014729">
    <property type="entry name" value="Rossmann-like_a/b/a_fold"/>
</dbReference>
<dbReference type="NCBIfam" id="TIGR00018">
    <property type="entry name" value="panC"/>
    <property type="match status" value="1"/>
</dbReference>
<dbReference type="PANTHER" id="PTHR21299">
    <property type="entry name" value="CYTIDYLATE KINASE/PANTOATE-BETA-ALANINE LIGASE"/>
    <property type="match status" value="1"/>
</dbReference>
<dbReference type="PANTHER" id="PTHR21299:SF1">
    <property type="entry name" value="PANTOATE--BETA-ALANINE LIGASE"/>
    <property type="match status" value="1"/>
</dbReference>
<dbReference type="Pfam" id="PF02569">
    <property type="entry name" value="Pantoate_ligase"/>
    <property type="match status" value="1"/>
</dbReference>
<dbReference type="SUPFAM" id="SSF52374">
    <property type="entry name" value="Nucleotidylyl transferase"/>
    <property type="match status" value="1"/>
</dbReference>
<proteinExistence type="inferred from homology"/>
<accession>B1Y4K7</accession>
<protein>
    <recommendedName>
        <fullName evidence="1">Pantothenate synthetase</fullName>
        <shortName evidence="1">PS</shortName>
        <ecNumber evidence="1">6.3.2.1</ecNumber>
    </recommendedName>
    <alternativeName>
        <fullName evidence="1">Pantoate--beta-alanine ligase</fullName>
    </alternativeName>
    <alternativeName>
        <fullName evidence="1">Pantoate-activating enzyme</fullName>
    </alternativeName>
</protein>
<sequence>MQIVHTLADLRAALAPVRRSAGTIAFVPTMGNLHEGHLALVRQARERVGAAGTVVASIFVNRLQFAPHEDFDRYPRTLARDAELLAPAGCDLVFAPAEAELYPQPQTFKVQPDPALAELLEGHFRPGFFTGVCTVVMKLFSIVQPQVAVFGKKDYQQLMVLRRMVEQFALPIEVLGGETLRAHDGLALSSRNGYLGAAEREQALQLSAALRDLLGAVRAGGAPLETLEAQACTALRAQGWLPDYLCVRRRTDLLPPGADEIAAGLPLVALGAARLGNTRLIDNLEG</sequence>
<organism>
    <name type="scientific">Leptothrix cholodnii (strain ATCC 51168 / LMG 8142 / SP-6)</name>
    <name type="common">Leptothrix discophora (strain SP-6)</name>
    <dbReference type="NCBI Taxonomy" id="395495"/>
    <lineage>
        <taxon>Bacteria</taxon>
        <taxon>Pseudomonadati</taxon>
        <taxon>Pseudomonadota</taxon>
        <taxon>Betaproteobacteria</taxon>
        <taxon>Burkholderiales</taxon>
        <taxon>Sphaerotilaceae</taxon>
        <taxon>Leptothrix</taxon>
    </lineage>
</organism>
<name>PANC_LEPCP</name>
<reference key="1">
    <citation type="submission" date="2008-03" db="EMBL/GenBank/DDBJ databases">
        <title>Complete sequence of Leptothrix cholodnii SP-6.</title>
        <authorList>
            <consortium name="US DOE Joint Genome Institute"/>
            <person name="Copeland A."/>
            <person name="Lucas S."/>
            <person name="Lapidus A."/>
            <person name="Glavina del Rio T."/>
            <person name="Dalin E."/>
            <person name="Tice H."/>
            <person name="Bruce D."/>
            <person name="Goodwin L."/>
            <person name="Pitluck S."/>
            <person name="Chertkov O."/>
            <person name="Brettin T."/>
            <person name="Detter J.C."/>
            <person name="Han C."/>
            <person name="Kuske C.R."/>
            <person name="Schmutz J."/>
            <person name="Larimer F."/>
            <person name="Land M."/>
            <person name="Hauser L."/>
            <person name="Kyrpides N."/>
            <person name="Lykidis A."/>
            <person name="Emerson D."/>
            <person name="Richardson P."/>
        </authorList>
    </citation>
    <scope>NUCLEOTIDE SEQUENCE [LARGE SCALE GENOMIC DNA]</scope>
    <source>
        <strain>ATCC 51168 / LMG 8142 / SP-6</strain>
    </source>
</reference>
<evidence type="ECO:0000255" key="1">
    <source>
        <dbReference type="HAMAP-Rule" id="MF_00158"/>
    </source>
</evidence>
<feature type="chain" id="PRO_1000097081" description="Pantothenate synthetase">
    <location>
        <begin position="1"/>
        <end position="286"/>
    </location>
</feature>
<feature type="active site" description="Proton donor" evidence="1">
    <location>
        <position position="37"/>
    </location>
</feature>
<feature type="binding site" evidence="1">
    <location>
        <begin position="30"/>
        <end position="37"/>
    </location>
    <ligand>
        <name>ATP</name>
        <dbReference type="ChEBI" id="CHEBI:30616"/>
    </ligand>
</feature>
<feature type="binding site" evidence="1">
    <location>
        <position position="64"/>
    </location>
    <ligand>
        <name>(R)-pantoate</name>
        <dbReference type="ChEBI" id="CHEBI:15980"/>
    </ligand>
</feature>
<feature type="binding site" evidence="1">
    <location>
        <position position="64"/>
    </location>
    <ligand>
        <name>beta-alanine</name>
        <dbReference type="ChEBI" id="CHEBI:57966"/>
    </ligand>
</feature>
<feature type="binding site" evidence="1">
    <location>
        <begin position="151"/>
        <end position="154"/>
    </location>
    <ligand>
        <name>ATP</name>
        <dbReference type="ChEBI" id="CHEBI:30616"/>
    </ligand>
</feature>
<feature type="binding site" evidence="1">
    <location>
        <position position="157"/>
    </location>
    <ligand>
        <name>(R)-pantoate</name>
        <dbReference type="ChEBI" id="CHEBI:15980"/>
    </ligand>
</feature>
<feature type="binding site" evidence="1">
    <location>
        <position position="180"/>
    </location>
    <ligand>
        <name>ATP</name>
        <dbReference type="ChEBI" id="CHEBI:30616"/>
    </ligand>
</feature>
<feature type="binding site" evidence="1">
    <location>
        <begin position="188"/>
        <end position="191"/>
    </location>
    <ligand>
        <name>ATP</name>
        <dbReference type="ChEBI" id="CHEBI:30616"/>
    </ligand>
</feature>